<name>S1_FOAMV</name>
<organism>
    <name type="scientific">Human spumaretrovirus</name>
    <name type="common">SFVcpz(hu)</name>
    <name type="synonym">Human foamy virus</name>
    <dbReference type="NCBI Taxonomy" id="11963"/>
    <lineage>
        <taxon>Viruses</taxon>
        <taxon>Riboviria</taxon>
        <taxon>Pararnavirae</taxon>
        <taxon>Artverviricota</taxon>
        <taxon>Revtraviricetes</taxon>
        <taxon>Ortervirales</taxon>
        <taxon>Retroviridae</taxon>
        <taxon>Spumaretrovirinae</taxon>
        <taxon>Spumavirus</taxon>
        <taxon>Simian foamy virus</taxon>
    </lineage>
</organism>
<protein>
    <recommendedName>
        <fullName>Putative uncharacterized protein S1</fullName>
    </recommendedName>
</protein>
<dbReference type="EMBL" id="X05591">
    <property type="status" value="NOT_ANNOTATED_CDS"/>
    <property type="molecule type" value="Genomic_RNA"/>
</dbReference>
<dbReference type="SMR" id="P14352"/>
<dbReference type="Gene3D" id="2.30.30.140">
    <property type="match status" value="1"/>
</dbReference>
<dbReference type="InterPro" id="IPR040903">
    <property type="entry name" value="SH3_11"/>
</dbReference>
<dbReference type="Pfam" id="PF18103">
    <property type="entry name" value="SH3_11"/>
    <property type="match status" value="1"/>
</dbReference>
<organismHost>
    <name type="scientific">Homo sapiens</name>
    <name type="common">Human</name>
    <dbReference type="NCBI Taxonomy" id="9606"/>
</organismHost>
<reference key="1">
    <citation type="journal article" date="1987" name="EMBO J.">
        <title>Nucleotide sequence analysis of the env gene and its flanking regions of the human spumaretrovirus reveals two novel genes.</title>
        <authorList>
            <person name="Fluegel R.M."/>
            <person name="Rethwilm A."/>
            <person name="Maurer B."/>
            <person name="Darai G."/>
        </authorList>
    </citation>
    <scope>NUCLEOTIDE SEQUENCE [GENOMIC RNA]</scope>
</reference>
<accession>P14352</accession>
<feature type="chain" id="PRO_0000066473" description="Putative uncharacterized protein S1">
    <location>
        <begin position="1"/>
        <end position="107"/>
    </location>
</feature>
<feature type="region of interest" description="Disordered" evidence="1">
    <location>
        <begin position="80"/>
        <end position="107"/>
    </location>
</feature>
<feature type="compositionally biased region" description="Polar residues" evidence="1">
    <location>
        <begin position="80"/>
        <end position="98"/>
    </location>
</feature>
<sequence>LDQRRRTFSFTGNSYFFIPSIHPSSLLSFLVSCCWPIGQERVARPASLRPRWHKPSTVLKVLNPRTVVILDHLGNNRTVSIDNLKPTSHQNGTTNDTATMDHLEKNE</sequence>
<evidence type="ECO:0000256" key="1">
    <source>
        <dbReference type="SAM" id="MobiDB-lite"/>
    </source>
</evidence>
<proteinExistence type="predicted"/>